<reference key="1">
    <citation type="journal article" date="2010" name="PLoS ONE">
        <title>Genome sequence of Cronobacter sakazakii BAA-894 and comparative genomic hybridization analysis with other Cronobacter species.</title>
        <authorList>
            <person name="Kucerova E."/>
            <person name="Clifton S.W."/>
            <person name="Xia X.Q."/>
            <person name="Long F."/>
            <person name="Porwollik S."/>
            <person name="Fulton L."/>
            <person name="Fronick C."/>
            <person name="Minx P."/>
            <person name="Kyung K."/>
            <person name="Warren W."/>
            <person name="Fulton R."/>
            <person name="Feng D."/>
            <person name="Wollam A."/>
            <person name="Shah N."/>
            <person name="Bhonagiri V."/>
            <person name="Nash W.E."/>
            <person name="Hallsworth-Pepin K."/>
            <person name="Wilson R.K."/>
            <person name="McClelland M."/>
            <person name="Forsythe S.J."/>
        </authorList>
    </citation>
    <scope>NUCLEOTIDE SEQUENCE [LARGE SCALE GENOMIC DNA]</scope>
    <source>
        <strain>ATCC BAA-894</strain>
    </source>
</reference>
<protein>
    <recommendedName>
        <fullName evidence="1">Pantothenate kinase</fullName>
        <ecNumber evidence="1">2.7.1.33</ecNumber>
    </recommendedName>
    <alternativeName>
        <fullName evidence="1">Pantothenic acid kinase</fullName>
    </alternativeName>
</protein>
<sequence>MSNKDQILTSPYLQFNRSQWAALRDSVPMTLTEGEIARLKGINEDLSLEEVAEIYLPLSRLLNFYISSNLRRQAVLEQFLGTNGQRIPYIISIAGSVAVGKSTTARVLQALLSRWPEHRRVELITTDGFLHPNAVLKERNLMKKKGFPQSYDMHRLVKFVSDIKSGVPNVTAPVYSHLIYDVIPDGDKVVNQPDILILEGLNVLQSGMDYPHDPHHVFVSDFVDFSIYVDAPEDLLQRWYINRFLKFREGAFTDPDSYFHHYAKLSEDEAVNIATQLWKEINWLNLKENILPTRERASLIMTKSANHAVDCVRLRK</sequence>
<comment type="catalytic activity">
    <reaction evidence="1">
        <text>(R)-pantothenate + ATP = (R)-4'-phosphopantothenate + ADP + H(+)</text>
        <dbReference type="Rhea" id="RHEA:16373"/>
        <dbReference type="ChEBI" id="CHEBI:10986"/>
        <dbReference type="ChEBI" id="CHEBI:15378"/>
        <dbReference type="ChEBI" id="CHEBI:29032"/>
        <dbReference type="ChEBI" id="CHEBI:30616"/>
        <dbReference type="ChEBI" id="CHEBI:456216"/>
        <dbReference type="EC" id="2.7.1.33"/>
    </reaction>
</comment>
<comment type="pathway">
    <text evidence="1">Cofactor biosynthesis; coenzyme A biosynthesis; CoA from (R)-pantothenate: step 1/5.</text>
</comment>
<comment type="subcellular location">
    <subcellularLocation>
        <location evidence="1">Cytoplasm</location>
    </subcellularLocation>
</comment>
<comment type="similarity">
    <text evidence="1">Belongs to the prokaryotic pantothenate kinase family.</text>
</comment>
<comment type="sequence caution" evidence="2">
    <conflict type="erroneous initiation">
        <sequence resource="EMBL-CDS" id="ABU78904"/>
    </conflict>
</comment>
<proteinExistence type="inferred from homology"/>
<feature type="chain" id="PRO_0000325550" description="Pantothenate kinase">
    <location>
        <begin position="1"/>
        <end position="316"/>
    </location>
</feature>
<feature type="binding site" evidence="1">
    <location>
        <begin position="95"/>
        <end position="102"/>
    </location>
    <ligand>
        <name>ATP</name>
        <dbReference type="ChEBI" id="CHEBI:30616"/>
    </ligand>
</feature>
<organism>
    <name type="scientific">Cronobacter sakazakii (strain ATCC BAA-894)</name>
    <name type="common">Enterobacter sakazakii</name>
    <dbReference type="NCBI Taxonomy" id="290339"/>
    <lineage>
        <taxon>Bacteria</taxon>
        <taxon>Pseudomonadati</taxon>
        <taxon>Pseudomonadota</taxon>
        <taxon>Gammaproteobacteria</taxon>
        <taxon>Enterobacterales</taxon>
        <taxon>Enterobacteriaceae</taxon>
        <taxon>Cronobacter</taxon>
    </lineage>
</organism>
<keyword id="KW-0067">ATP-binding</keyword>
<keyword id="KW-0173">Coenzyme A biosynthesis</keyword>
<keyword id="KW-0963">Cytoplasm</keyword>
<keyword id="KW-0418">Kinase</keyword>
<keyword id="KW-0547">Nucleotide-binding</keyword>
<keyword id="KW-1185">Reference proteome</keyword>
<keyword id="KW-0808">Transferase</keyword>
<accession>A7MQP3</accession>
<dbReference type="EC" id="2.7.1.33" evidence="1"/>
<dbReference type="EMBL" id="CP000783">
    <property type="protein sequence ID" value="ABU78904.1"/>
    <property type="status" value="ALT_INIT"/>
    <property type="molecule type" value="Genomic_DNA"/>
</dbReference>
<dbReference type="SMR" id="A7MQP3"/>
<dbReference type="KEGG" id="esa:ESA_03704"/>
<dbReference type="HOGENOM" id="CLU_053818_1_1_6"/>
<dbReference type="UniPathway" id="UPA00241">
    <property type="reaction ID" value="UER00352"/>
</dbReference>
<dbReference type="Proteomes" id="UP000000260">
    <property type="component" value="Chromosome"/>
</dbReference>
<dbReference type="GO" id="GO:0005737">
    <property type="term" value="C:cytoplasm"/>
    <property type="evidence" value="ECO:0007669"/>
    <property type="project" value="UniProtKB-SubCell"/>
</dbReference>
<dbReference type="GO" id="GO:0005524">
    <property type="term" value="F:ATP binding"/>
    <property type="evidence" value="ECO:0007669"/>
    <property type="project" value="UniProtKB-UniRule"/>
</dbReference>
<dbReference type="GO" id="GO:0004594">
    <property type="term" value="F:pantothenate kinase activity"/>
    <property type="evidence" value="ECO:0007669"/>
    <property type="project" value="UniProtKB-UniRule"/>
</dbReference>
<dbReference type="GO" id="GO:0015937">
    <property type="term" value="P:coenzyme A biosynthetic process"/>
    <property type="evidence" value="ECO:0007669"/>
    <property type="project" value="UniProtKB-UniRule"/>
</dbReference>
<dbReference type="CDD" id="cd02025">
    <property type="entry name" value="PanK"/>
    <property type="match status" value="1"/>
</dbReference>
<dbReference type="FunFam" id="3.40.50.300:FF:000242">
    <property type="entry name" value="Pantothenate kinase"/>
    <property type="match status" value="1"/>
</dbReference>
<dbReference type="Gene3D" id="3.40.50.300">
    <property type="entry name" value="P-loop containing nucleotide triphosphate hydrolases"/>
    <property type="match status" value="1"/>
</dbReference>
<dbReference type="HAMAP" id="MF_00215">
    <property type="entry name" value="Pantothen_kinase_1"/>
    <property type="match status" value="1"/>
</dbReference>
<dbReference type="InterPro" id="IPR027417">
    <property type="entry name" value="P-loop_NTPase"/>
</dbReference>
<dbReference type="InterPro" id="IPR004566">
    <property type="entry name" value="PanK"/>
</dbReference>
<dbReference type="InterPro" id="IPR006083">
    <property type="entry name" value="PRK/URK"/>
</dbReference>
<dbReference type="NCBIfam" id="TIGR00554">
    <property type="entry name" value="panK_bact"/>
    <property type="match status" value="1"/>
</dbReference>
<dbReference type="PANTHER" id="PTHR10285">
    <property type="entry name" value="URIDINE KINASE"/>
    <property type="match status" value="1"/>
</dbReference>
<dbReference type="Pfam" id="PF00485">
    <property type="entry name" value="PRK"/>
    <property type="match status" value="1"/>
</dbReference>
<dbReference type="PIRSF" id="PIRSF000545">
    <property type="entry name" value="Pantothenate_kin"/>
    <property type="match status" value="1"/>
</dbReference>
<dbReference type="SUPFAM" id="SSF52540">
    <property type="entry name" value="P-loop containing nucleoside triphosphate hydrolases"/>
    <property type="match status" value="1"/>
</dbReference>
<name>COAA_CROS8</name>
<gene>
    <name evidence="1" type="primary">coaA</name>
    <name type="ordered locus">ESA_03704</name>
</gene>
<evidence type="ECO:0000255" key="1">
    <source>
        <dbReference type="HAMAP-Rule" id="MF_00215"/>
    </source>
</evidence>
<evidence type="ECO:0000305" key="2"/>